<organismHost>
    <name type="scientific">Chlorocebus aethiops</name>
    <name type="common">Green monkey</name>
    <name type="synonym">Cercopithecus aethiops</name>
    <dbReference type="NCBI Taxonomy" id="9534"/>
</organismHost>
<organismHost>
    <name type="scientific">Homo sapiens</name>
    <name type="common">Human</name>
    <dbReference type="NCBI Taxonomy" id="9606"/>
</organismHost>
<organismHost>
    <name type="scientific">Rousettus aegyptiacus</name>
    <name type="common">Egyptian fruit bat</name>
    <name type="synonym">Pteropus aegyptiacus</name>
    <dbReference type="NCBI Taxonomy" id="9407"/>
</organismHost>
<gene>
    <name type="primary">VP40</name>
</gene>
<dbReference type="EMBL" id="DQ447653">
    <property type="protein sequence ID" value="ABE27014.1"/>
    <property type="molecule type" value="Genomic_RNA"/>
</dbReference>
<dbReference type="EMBL" id="DQ447654">
    <property type="protein sequence ID" value="ABE27021.1"/>
    <property type="molecule type" value="Genomic_RNA"/>
</dbReference>
<dbReference type="EMBL" id="DQ447655">
    <property type="protein sequence ID" value="ABE27028.1"/>
    <property type="molecule type" value="Genomic_RNA"/>
</dbReference>
<dbReference type="EMBL" id="DQ447656">
    <property type="protein sequence ID" value="ABE27035.1"/>
    <property type="molecule type" value="Genomic_RNA"/>
</dbReference>
<dbReference type="EMBL" id="DQ447657">
    <property type="protein sequence ID" value="ABE27042.1"/>
    <property type="molecule type" value="Genomic_RNA"/>
</dbReference>
<dbReference type="EMBL" id="DQ447658">
    <property type="protein sequence ID" value="ABE27049.1"/>
    <property type="molecule type" value="Genomic_RNA"/>
</dbReference>
<dbReference type="EMBL" id="DQ447659">
    <property type="protein sequence ID" value="ABE27056.1"/>
    <property type="molecule type" value="Genomic_RNA"/>
</dbReference>
<dbReference type="EMBL" id="DQ447660">
    <property type="protein sequence ID" value="ABE27063.1"/>
    <property type="molecule type" value="Genomic_RNA"/>
</dbReference>
<dbReference type="SMR" id="Q1PD51"/>
<dbReference type="IntAct" id="Q1PD51">
    <property type="interactions" value="8"/>
</dbReference>
<dbReference type="Proteomes" id="UP000008242">
    <property type="component" value="Genome"/>
</dbReference>
<dbReference type="Proteomes" id="UP000097432">
    <property type="component" value="Genome"/>
</dbReference>
<dbReference type="Proteomes" id="UP000102513">
    <property type="component" value="Genome"/>
</dbReference>
<dbReference type="Proteomes" id="UP000109618">
    <property type="component" value="Genome"/>
</dbReference>
<dbReference type="Proteomes" id="UP000115353">
    <property type="component" value="Genome"/>
</dbReference>
<dbReference type="Proteomes" id="UP000130744">
    <property type="component" value="Genome"/>
</dbReference>
<dbReference type="Proteomes" id="UP000168007">
    <property type="component" value="Genome"/>
</dbReference>
<dbReference type="Proteomes" id="UP000171838">
    <property type="component" value="Genome"/>
</dbReference>
<dbReference type="GO" id="GO:0033645">
    <property type="term" value="C:host cell endomembrane system"/>
    <property type="evidence" value="ECO:0007669"/>
    <property type="project" value="UniProtKB-SubCell"/>
</dbReference>
<dbReference type="GO" id="GO:0044185">
    <property type="term" value="C:host cell late endosome membrane"/>
    <property type="evidence" value="ECO:0007669"/>
    <property type="project" value="UniProtKB-SubCell"/>
</dbReference>
<dbReference type="GO" id="GO:0020002">
    <property type="term" value="C:host cell plasma membrane"/>
    <property type="evidence" value="ECO:0007669"/>
    <property type="project" value="UniProtKB-SubCell"/>
</dbReference>
<dbReference type="GO" id="GO:0016020">
    <property type="term" value="C:membrane"/>
    <property type="evidence" value="ECO:0007669"/>
    <property type="project" value="UniProtKB-KW"/>
</dbReference>
<dbReference type="GO" id="GO:0055036">
    <property type="term" value="C:virion membrane"/>
    <property type="evidence" value="ECO:0007669"/>
    <property type="project" value="UniProtKB-SubCell"/>
</dbReference>
<dbReference type="GO" id="GO:0039660">
    <property type="term" value="F:structural constituent of virion"/>
    <property type="evidence" value="ECO:0007669"/>
    <property type="project" value="UniProtKB-KW"/>
</dbReference>
<dbReference type="GO" id="GO:0052170">
    <property type="term" value="P:symbiont-mediated suppression of host innate immune response"/>
    <property type="evidence" value="ECO:0007669"/>
    <property type="project" value="UniProtKB-KW"/>
</dbReference>
<dbReference type="GO" id="GO:0039576">
    <property type="term" value="P:symbiont-mediated suppression of host JAK-STAT cascade via inhibition of JAK1 activity"/>
    <property type="evidence" value="ECO:0007669"/>
    <property type="project" value="UniProtKB-KW"/>
</dbReference>
<dbReference type="GO" id="GO:0039502">
    <property type="term" value="P:symbiont-mediated suppression of host type I interferon-mediated signaling pathway"/>
    <property type="evidence" value="ECO:0007669"/>
    <property type="project" value="UniProtKB-KW"/>
</dbReference>
<dbReference type="GO" id="GO:0039702">
    <property type="term" value="P:viral budding via host ESCRT complex"/>
    <property type="evidence" value="ECO:0007669"/>
    <property type="project" value="UniProtKB-KW"/>
</dbReference>
<dbReference type="Gene3D" id="2.70.20.20">
    <property type="entry name" value="Matrix protein VP40, N-terminal domain"/>
    <property type="match status" value="1"/>
</dbReference>
<dbReference type="InterPro" id="IPR008986">
    <property type="entry name" value="EV_matrix"/>
</dbReference>
<dbReference type="InterPro" id="IPR043079">
    <property type="entry name" value="EV_matrix_protein_N"/>
</dbReference>
<dbReference type="InterPro" id="IPR038057">
    <property type="entry name" value="EV_matrix_sf"/>
</dbReference>
<dbReference type="Pfam" id="PF07447">
    <property type="entry name" value="Matrix_Filo"/>
    <property type="match status" value="1"/>
</dbReference>
<dbReference type="PIRSF" id="PIRSF018327">
    <property type="entry name" value="VP40_FiloV"/>
    <property type="match status" value="1"/>
</dbReference>
<dbReference type="SUPFAM" id="SSF50012">
    <property type="entry name" value="EV matrix protein"/>
    <property type="match status" value="1"/>
</dbReference>
<keyword id="KW-1032">Host cell membrane</keyword>
<keyword id="KW-1039">Host endosome</keyword>
<keyword id="KW-1043">Host membrane</keyword>
<keyword id="KW-0945">Host-virus interaction</keyword>
<keyword id="KW-1090">Inhibition of host innate immune response by virus</keyword>
<keyword id="KW-1114">Inhibition of host interferon signaling pathway by virus</keyword>
<keyword id="KW-1096">Inhibition of host JAK1 by virus</keyword>
<keyword id="KW-0922">Interferon antiviral system evasion</keyword>
<keyword id="KW-0472">Membrane</keyword>
<keyword id="KW-1198">Viral budding</keyword>
<keyword id="KW-1187">Viral budding via the host ESCRT complexes</keyword>
<keyword id="KW-0899">Viral immunoevasion</keyword>
<keyword id="KW-0468">Viral matrix protein</keyword>
<keyword id="KW-1188">Viral release from host cell</keyword>
<keyword id="KW-0946">Virion</keyword>
<protein>
    <recommendedName>
        <fullName>Matrix protein VP40</fullName>
    </recommendedName>
    <alternativeName>
        <fullName evidence="2">Marburg VP40</fullName>
        <shortName evidence="2">mVP40</shortName>
    </alternativeName>
    <alternativeName>
        <fullName>Membrane-associated protein VP40</fullName>
    </alternativeName>
</protein>
<reference key="1">
    <citation type="journal article" date="2006" name="J. Virol.">
        <title>Marburgvirus genomics and association with a large hemorrhagic fever outbreak in Angola.</title>
        <authorList>
            <person name="Towner J.S."/>
            <person name="Khristova M.L."/>
            <person name="Sealy T.K."/>
            <person name="Vincent M.J."/>
            <person name="Erickson B.R."/>
            <person name="Bawiec D.A."/>
            <person name="Hartman A.L."/>
            <person name="Comer J.A."/>
            <person name="Zaki S.R."/>
            <person name="Stroeher U."/>
            <person name="Gomes da Silva F."/>
            <person name="del Castillo F."/>
            <person name="Rollin P.E."/>
            <person name="Ksiazek T.G."/>
            <person name="Nichol S.T."/>
        </authorList>
    </citation>
    <scope>NUCLEOTIDE SEQUENCE [GENOMIC RNA]</scope>
    <source>
        <strain>Isolate Ang0126</strain>
        <strain>Isolate Ang0214</strain>
        <strain>Isolate Ang0215</strain>
        <strain>Isolate Ang0754</strain>
        <strain>Isolate Ang0998</strain>
        <strain>Isolate Ang1379c</strain>
        <strain>Isolate Ang1381</strain>
        <strain>Isolate Ang1386</strain>
    </source>
</reference>
<feature type="chain" id="PRO_0000314998" description="Matrix protein VP40">
    <location>
        <begin position="1"/>
        <end position="303"/>
    </location>
</feature>
<feature type="short sequence motif" description="PPXY motif" evidence="1">
    <location>
        <begin position="16"/>
        <end position="19"/>
    </location>
</feature>
<organism>
    <name type="scientific">Lake Victoria marburgvirus (strain Angola/2005)</name>
    <name type="common">MARV</name>
    <dbReference type="NCBI Taxonomy" id="378830"/>
    <lineage>
        <taxon>Viruses</taxon>
        <taxon>Riboviria</taxon>
        <taxon>Orthornavirae</taxon>
        <taxon>Negarnaviricota</taxon>
        <taxon>Haploviricotina</taxon>
        <taxon>Monjiviricetes</taxon>
        <taxon>Mononegavirales</taxon>
        <taxon>Filoviridae</taxon>
        <taxon>Orthomarburgvirus</taxon>
        <taxon>Orthomarburgvirus marburgense</taxon>
    </lineage>
</organism>
<proteinExistence type="evidence at protein level"/>
<sequence length="303" mass="33780">MASSSNYNTYMQYLNPPPYADHGANQLIPADQLSNQQGITPNYVGDLNLDDQFKGNVCHAFTLEAIIDISAYNERTVKGVPAWLPLGIMSNFEYPLAHTVAALLTGSYTITQFTHNGQKFVRVNRLGTGIPAHPLRMLREGNQAFIQNMVIPRNFSTNQFTYNLTNLVLSVQKLPDDAWRPSKDKLIGNTMHPAVSVHPNLPPIVLPTVKKQAYRQHKNPNNGPLLAISGILHQLRVEKVPEKTSLFRISLPADMFSVKEGMMKKRGENSPVVYFQAPENFPLNGFNNRQVVLAYANPTLSAV</sequence>
<evidence type="ECO:0000250" key="1"/>
<evidence type="ECO:0000250" key="2">
    <source>
        <dbReference type="UniProtKB" id="P35260"/>
    </source>
</evidence>
<evidence type="ECO:0000250" key="3">
    <source>
        <dbReference type="UniProtKB" id="Q05128"/>
    </source>
</evidence>
<evidence type="ECO:0000305" key="4"/>
<name>VP40_MABVA</name>
<accession>Q1PD51</accession>
<comment type="function">
    <text evidence="1 2">Plays an essential role virus particle assembly and budding. Promotes virus assembly and budding by interacting with host proteins of the multivesicular body pathway. The interaction with host E3 ubiquitin ligase SMURF2 facilitates virus budding (By similarity). The interaction with the nucleocapsid and the plasma membrane may also facilitate virus budding. Specific interactions with membrane-associated GP and VP24 during the budding process may also occur (By similarity). May play a role in genome replication (By similarity).</text>
</comment>
<comment type="subunit">
    <text evidence="2">Exists as a dimer until it reorganizes at the plasma membrane into multimeric form. Interacts with host TSG101. Interacts (via PPXY motif) with SMURF2 (via WW domains); the interaction positively regulates virus budding.</text>
</comment>
<comment type="interaction">
    <interactant intactId="EBI-40243977">
        <id>Q1PD51</id>
    </interactant>
    <interactant intactId="EBI-1564678">
        <id>Q96J02</id>
        <label>ITCH</label>
    </interactant>
    <organismsDiffer>true</organismsDiffer>
    <experiments>2</experiments>
</comment>
<comment type="subcellular location">
    <subcellularLocation>
        <location evidence="2">Virion membrane</location>
        <topology evidence="2">Peripheral membrane protein</topology>
    </subcellularLocation>
    <subcellularLocation>
        <location evidence="2">Host late endosome membrane</location>
        <topology evidence="2">Peripheral membrane protein</topology>
    </subcellularLocation>
    <subcellularLocation>
        <location evidence="2">Host cell membrane</location>
        <topology evidence="2">Peripheral membrane protein</topology>
        <orientation evidence="2">Cytoplasmic side</orientation>
    </subcellularLocation>
    <subcellularLocation>
        <location evidence="2">Host endomembrane system</location>
        <topology evidence="2">Peripheral membrane protein</topology>
    </subcellularLocation>
    <text evidence="2">In virion, localizes on the intravirional side of the membrane. In the host cell, it is found associated with virus-induced membrane proliferation foci and probably also in multivesicular bodies. These VP40-enriched membrane clusters are then redistributed to the plasma membrane where budding takes place.</text>
</comment>
<comment type="domain">
    <text evidence="2 3">Late-budding domains (L domains) are short sequence motifs essential for viral particle budding. They recruit proteins of the host ESCRT machinery (Endosomal Sorting Complex Required for Transport) or ESCRT-associated proteins. VP40 contains one L domain: a PPXY motif which potentially interacts with the WW domain 3 of NEDD4 E3 ubiquitin ligase and the three WW domains of SMURF2 E3 ubiquitin ligase.</text>
</comment>
<comment type="miscellaneous">
    <text>Most abundant protein in the virion.</text>
</comment>
<comment type="similarity">
    <text evidence="4">Belongs to the filoviridae matrix protein VP40 family.</text>
</comment>